<keyword id="KW-0002">3D-structure</keyword>
<keyword id="KW-0903">Direct protein sequencing</keyword>
<keyword id="KW-1015">Disulfide bond</keyword>
<keyword id="KW-0325">Glycoprotein</keyword>
<keyword id="KW-0646">Protease inhibitor</keyword>
<keyword id="KW-0964">Secreted</keyword>
<keyword id="KW-0722">Serine protease inhibitor</keyword>
<keyword id="KW-0765">Sulfation</keyword>
<name>HIR2_HIRME</name>
<evidence type="ECO:0000250" key="1"/>
<evidence type="ECO:0000256" key="2">
    <source>
        <dbReference type="SAM" id="MobiDB-lite"/>
    </source>
</evidence>
<evidence type="ECO:0000305" key="3"/>
<evidence type="ECO:0007829" key="4">
    <source>
        <dbReference type="PDB" id="1C5N"/>
    </source>
</evidence>
<organism>
    <name type="scientific">Hirudo medicinalis</name>
    <name type="common">Medicinal leech</name>
    <dbReference type="NCBI Taxonomy" id="6421"/>
    <lineage>
        <taxon>Eukaryota</taxon>
        <taxon>Metazoa</taxon>
        <taxon>Spiralia</taxon>
        <taxon>Lophotrochozoa</taxon>
        <taxon>Annelida</taxon>
        <taxon>Clitellata</taxon>
        <taxon>Hirudinea</taxon>
        <taxon>Hirudinida</taxon>
        <taxon>Hirudiniformes</taxon>
        <taxon>Hirudinidae</taxon>
        <taxon>Hirudo</taxon>
    </lineage>
</organism>
<comment type="function">
    <text>Hirudin is a potent thrombin-specific protease inhibitor. It forms a stable non-covalent complex with alpha-thrombin, thereby abolishing its ability to cleave fibrinogen.</text>
</comment>
<comment type="subcellular location">
    <subcellularLocation>
        <location>Secreted</location>
    </subcellularLocation>
</comment>
<comment type="similarity">
    <text evidence="3">Belongs to the protease inhibitor I14 (hirudin) family.</text>
</comment>
<accession>P28504</accession>
<sequence length="65" mass="6987">ITYTDCTESGQDLCLCEGSNVCGKGNKCILGSNGEENQCVTGEGTPKPQSHNDGDFEEIPEEYLQ</sequence>
<protein>
    <recommendedName>
        <fullName>Hirudin-2</fullName>
    </recommendedName>
    <alternativeName>
        <fullName>Hirudin II</fullName>
    </alternativeName>
</protein>
<dbReference type="PIR" id="S05678">
    <property type="entry name" value="S05678"/>
</dbReference>
<dbReference type="PDB" id="1A3B">
    <property type="method" value="X-ray"/>
    <property type="resolution" value="1.80 A"/>
    <property type="chains" value="I=49-64"/>
</dbReference>
<dbReference type="PDB" id="1A3E">
    <property type="method" value="X-ray"/>
    <property type="resolution" value="1.85 A"/>
    <property type="chains" value="I=49-64"/>
</dbReference>
<dbReference type="PDB" id="1ABI">
    <property type="method" value="X-ray"/>
    <property type="resolution" value="2.30 A"/>
    <property type="chains" value="I=54-64"/>
</dbReference>
<dbReference type="PDB" id="1C1U">
    <property type="method" value="X-ray"/>
    <property type="resolution" value="1.75 A"/>
    <property type="chains" value="I=55-65"/>
</dbReference>
<dbReference type="PDB" id="1C1V">
    <property type="method" value="X-ray"/>
    <property type="resolution" value="1.98 A"/>
    <property type="chains" value="I=55-65"/>
</dbReference>
<dbReference type="PDB" id="1C1W">
    <property type="method" value="X-ray"/>
    <property type="resolution" value="1.90 A"/>
    <property type="chains" value="I=55-65"/>
</dbReference>
<dbReference type="PDB" id="1C4U">
    <property type="method" value="X-ray"/>
    <property type="resolution" value="2.10 A"/>
    <property type="chains" value="3=55-63"/>
</dbReference>
<dbReference type="PDB" id="1C5L">
    <property type="method" value="X-ray"/>
    <property type="resolution" value="1.47 A"/>
    <property type="chains" value="I=55-64"/>
</dbReference>
<dbReference type="PDB" id="1C5N">
    <property type="method" value="X-ray"/>
    <property type="resolution" value="1.50 A"/>
    <property type="chains" value="I=55-64"/>
</dbReference>
<dbReference type="PDB" id="1C5O">
    <property type="method" value="X-ray"/>
    <property type="resolution" value="1.90 A"/>
    <property type="chains" value="I=55-65"/>
</dbReference>
<dbReference type="PDB" id="1D9I">
    <property type="method" value="X-ray"/>
    <property type="resolution" value="2.30 A"/>
    <property type="chains" value="I=55-64"/>
</dbReference>
<dbReference type="PDB" id="1FPC">
    <property type="method" value="X-ray"/>
    <property type="resolution" value="2.30 A"/>
    <property type="chains" value="I=54-64"/>
</dbReference>
<dbReference type="PDB" id="1GHV">
    <property type="method" value="X-ray"/>
    <property type="resolution" value="1.85 A"/>
    <property type="chains" value="I=55-65"/>
</dbReference>
<dbReference type="PDB" id="1GHW">
    <property type="method" value="X-ray"/>
    <property type="resolution" value="1.75 A"/>
    <property type="chains" value="I=55-65"/>
</dbReference>
<dbReference type="PDB" id="1GHX">
    <property type="method" value="X-ray"/>
    <property type="resolution" value="1.65 A"/>
    <property type="chains" value="I=55-65"/>
</dbReference>
<dbReference type="PDB" id="1GHY">
    <property type="method" value="X-ray"/>
    <property type="resolution" value="1.85 A"/>
    <property type="chains" value="I=55-65"/>
</dbReference>
<dbReference type="PDB" id="1GJ4">
    <property type="method" value="X-ray"/>
    <property type="resolution" value="1.81 A"/>
    <property type="chains" value="I=55-65"/>
</dbReference>
<dbReference type="PDB" id="1GJ5">
    <property type="method" value="X-ray"/>
    <property type="resolution" value="1.73 A"/>
    <property type="chains" value="I=55-65"/>
</dbReference>
<dbReference type="PDB" id="1IHS">
    <property type="method" value="X-ray"/>
    <property type="resolution" value="2.00 A"/>
    <property type="chains" value="I=49-65"/>
</dbReference>
<dbReference type="PDB" id="1NM6">
    <property type="method" value="X-ray"/>
    <property type="resolution" value="1.80 A"/>
    <property type="chains" value="B=55-64"/>
</dbReference>
<dbReference type="PDB" id="1NT1">
    <property type="method" value="X-ray"/>
    <property type="resolution" value="2.00 A"/>
    <property type="chains" value="H=55-64"/>
</dbReference>
<dbReference type="PDB" id="1NY2">
    <property type="method" value="X-ray"/>
    <property type="resolution" value="2.30 A"/>
    <property type="chains" value="3=55-64"/>
</dbReference>
<dbReference type="PDB" id="1O2G">
    <property type="method" value="X-ray"/>
    <property type="resolution" value="1.58 A"/>
    <property type="chains" value="I=55-65"/>
</dbReference>
<dbReference type="PDB" id="1QBV">
    <property type="method" value="X-ray"/>
    <property type="resolution" value="1.80 A"/>
    <property type="chains" value="E=55-65"/>
</dbReference>
<dbReference type="PDB" id="1SB1">
    <property type="method" value="X-ray"/>
    <property type="resolution" value="1.90 A"/>
    <property type="chains" value="I=55-63"/>
</dbReference>
<dbReference type="PDB" id="1SL3">
    <property type="method" value="X-ray"/>
    <property type="resolution" value="1.81 A"/>
    <property type="chains" value="B=55-64"/>
</dbReference>
<dbReference type="PDB" id="1TA2">
    <property type="method" value="X-ray"/>
    <property type="resolution" value="2.30 A"/>
    <property type="chains" value="B=55-64"/>
</dbReference>
<dbReference type="PDB" id="1TA6">
    <property type="method" value="X-ray"/>
    <property type="resolution" value="1.90 A"/>
    <property type="chains" value="B=55-64"/>
</dbReference>
<dbReference type="PDB" id="1TMT">
    <property type="method" value="X-ray"/>
    <property type="resolution" value="2.20 A"/>
    <property type="chains" value="J=53-65"/>
</dbReference>
<dbReference type="PDB" id="1TWX">
    <property type="method" value="X-ray"/>
    <property type="resolution" value="2.40 A"/>
    <property type="chains" value="C=55-64"/>
</dbReference>
<dbReference type="PDB" id="1VR1">
    <property type="method" value="X-ray"/>
    <property type="resolution" value="1.90 A"/>
    <property type="chains" value="I=55-64"/>
</dbReference>
<dbReference type="PDB" id="1XM1">
    <property type="method" value="X-ray"/>
    <property type="resolution" value="2.30 A"/>
    <property type="chains" value="H=55-64"/>
</dbReference>
<dbReference type="PDB" id="1YPE">
    <property type="method" value="X-ray"/>
    <property type="resolution" value="1.81 A"/>
    <property type="chains" value="I=55-64"/>
</dbReference>
<dbReference type="PDB" id="1YPG">
    <property type="method" value="X-ray"/>
    <property type="resolution" value="1.80 A"/>
    <property type="chains" value="I=55-64"/>
</dbReference>
<dbReference type="PDB" id="1YPJ">
    <property type="method" value="X-ray"/>
    <property type="resolution" value="1.78 A"/>
    <property type="chains" value="I=55-64"/>
</dbReference>
<dbReference type="PDB" id="1YPK">
    <property type="method" value="X-ray"/>
    <property type="resolution" value="1.78 A"/>
    <property type="chains" value="I=55-64"/>
</dbReference>
<dbReference type="PDB" id="1YPL">
    <property type="method" value="X-ray"/>
    <property type="resolution" value="1.85 A"/>
    <property type="chains" value="I=55-64"/>
</dbReference>
<dbReference type="PDB" id="1YPM">
    <property type="method" value="X-ray"/>
    <property type="resolution" value="1.85 A"/>
    <property type="chains" value="I=55-64"/>
</dbReference>
<dbReference type="PDB" id="1ZRB">
    <property type="method" value="X-ray"/>
    <property type="resolution" value="1.90 A"/>
    <property type="chains" value="B=55-65"/>
</dbReference>
<dbReference type="PDB" id="2GDE">
    <property type="method" value="X-ray"/>
    <property type="resolution" value="2.00 A"/>
    <property type="chains" value="D=55-64"/>
</dbReference>
<dbReference type="PDB" id="2HGT">
    <property type="method" value="X-ray"/>
    <property type="resolution" value="2.20 A"/>
    <property type="chains" value="J=54-64"/>
</dbReference>
<dbReference type="PDB" id="2PKS">
    <property type="method" value="X-ray"/>
    <property type="resolution" value="2.50 A"/>
    <property type="chains" value="D=55-64"/>
</dbReference>
<dbReference type="PDB" id="3VXE">
    <property type="method" value="X-ray"/>
    <property type="resolution" value="1.25 A"/>
    <property type="chains" value="J=54-64"/>
</dbReference>
<dbReference type="PDB" id="3VXF">
    <property type="method" value="Other"/>
    <property type="resolution" value="1.60 A"/>
    <property type="chains" value="J=54-64"/>
</dbReference>
<dbReference type="PDB" id="6ZUG">
    <property type="method" value="X-ray"/>
    <property type="resolution" value="1.80 A"/>
    <property type="chains" value="I=54-64"/>
</dbReference>
<dbReference type="PDB" id="6ZUH">
    <property type="method" value="X-ray"/>
    <property type="resolution" value="1.70 A"/>
    <property type="chains" value="I=54-64"/>
</dbReference>
<dbReference type="PDB" id="6ZUN">
    <property type="method" value="X-ray"/>
    <property type="resolution" value="1.79 A"/>
    <property type="chains" value="I=54-64"/>
</dbReference>
<dbReference type="PDB" id="6ZUU">
    <property type="method" value="X-ray"/>
    <property type="resolution" value="1.94 A"/>
    <property type="chains" value="I=54-64"/>
</dbReference>
<dbReference type="PDB" id="6ZUW">
    <property type="method" value="X-ray"/>
    <property type="resolution" value="2.00 A"/>
    <property type="chains" value="I=54-64"/>
</dbReference>
<dbReference type="PDB" id="6ZUX">
    <property type="method" value="X-ray"/>
    <property type="resolution" value="1.94 A"/>
    <property type="chains" value="I=54-64"/>
</dbReference>
<dbReference type="PDB" id="6ZV7">
    <property type="method" value="X-ray"/>
    <property type="resolution" value="1.94 A"/>
    <property type="chains" value="I=54-64"/>
</dbReference>
<dbReference type="PDB" id="6ZV8">
    <property type="method" value="X-ray"/>
    <property type="resolution" value="1.70 A"/>
    <property type="chains" value="I=54-64"/>
</dbReference>
<dbReference type="PDBsum" id="1A3B"/>
<dbReference type="PDBsum" id="1A3E"/>
<dbReference type="PDBsum" id="1ABI"/>
<dbReference type="PDBsum" id="1C1U"/>
<dbReference type="PDBsum" id="1C1V"/>
<dbReference type="PDBsum" id="1C1W"/>
<dbReference type="PDBsum" id="1C4U"/>
<dbReference type="PDBsum" id="1C5L"/>
<dbReference type="PDBsum" id="1C5N"/>
<dbReference type="PDBsum" id="1C5O"/>
<dbReference type="PDBsum" id="1D9I"/>
<dbReference type="PDBsum" id="1FPC"/>
<dbReference type="PDBsum" id="1GHV"/>
<dbReference type="PDBsum" id="1GHW"/>
<dbReference type="PDBsum" id="1GHX"/>
<dbReference type="PDBsum" id="1GHY"/>
<dbReference type="PDBsum" id="1GJ4"/>
<dbReference type="PDBsum" id="1GJ5"/>
<dbReference type="PDBsum" id="1IHS"/>
<dbReference type="PDBsum" id="1NM6"/>
<dbReference type="PDBsum" id="1NT1"/>
<dbReference type="PDBsum" id="1NY2"/>
<dbReference type="PDBsum" id="1O2G"/>
<dbReference type="PDBsum" id="1QBV"/>
<dbReference type="PDBsum" id="1SB1"/>
<dbReference type="PDBsum" id="1SL3"/>
<dbReference type="PDBsum" id="1TA2"/>
<dbReference type="PDBsum" id="1TA6"/>
<dbReference type="PDBsum" id="1TMT"/>
<dbReference type="PDBsum" id="1TWX"/>
<dbReference type="PDBsum" id="1VR1"/>
<dbReference type="PDBsum" id="1XM1"/>
<dbReference type="PDBsum" id="1YPE"/>
<dbReference type="PDBsum" id="1YPG"/>
<dbReference type="PDBsum" id="1YPJ"/>
<dbReference type="PDBsum" id="1YPK"/>
<dbReference type="PDBsum" id="1YPL"/>
<dbReference type="PDBsum" id="1YPM"/>
<dbReference type="PDBsum" id="1ZRB"/>
<dbReference type="PDBsum" id="2GDE"/>
<dbReference type="PDBsum" id="2HGT"/>
<dbReference type="PDBsum" id="2PKS"/>
<dbReference type="PDBsum" id="3VXE"/>
<dbReference type="PDBsum" id="3VXF"/>
<dbReference type="PDBsum" id="6ZUG"/>
<dbReference type="PDBsum" id="6ZUH"/>
<dbReference type="PDBsum" id="6ZUN"/>
<dbReference type="PDBsum" id="6ZUU"/>
<dbReference type="PDBsum" id="6ZUW"/>
<dbReference type="PDBsum" id="6ZUX"/>
<dbReference type="PDBsum" id="6ZV7"/>
<dbReference type="PDBsum" id="6ZV8"/>
<dbReference type="SMR" id="P28504"/>
<dbReference type="Allergome" id="9843">
    <property type="allergen name" value="Hir me Hirudin"/>
</dbReference>
<dbReference type="MEROPS" id="I14.001"/>
<dbReference type="EvolutionaryTrace" id="P28504"/>
<dbReference type="GO" id="GO:0005576">
    <property type="term" value="C:extracellular region"/>
    <property type="evidence" value="ECO:0007669"/>
    <property type="project" value="UniProtKB-SubCell"/>
</dbReference>
<dbReference type="GO" id="GO:0004867">
    <property type="term" value="F:serine-type endopeptidase inhibitor activity"/>
    <property type="evidence" value="ECO:0007669"/>
    <property type="project" value="UniProtKB-KW"/>
</dbReference>
<dbReference type="FunFam" id="2.70.10.10:FF:000001">
    <property type="entry name" value="Hirudin variant-1"/>
    <property type="match status" value="1"/>
</dbReference>
<dbReference type="Gene3D" id="2.70.10.10">
    <property type="entry name" value="Thrombin Inhibitor (Hirudin), subunit I"/>
    <property type="match status" value="1"/>
</dbReference>
<dbReference type="InterPro" id="IPR024793">
    <property type="entry name" value="Hirudin"/>
</dbReference>
<dbReference type="InterPro" id="IPR011061">
    <property type="entry name" value="Hirudin/antistatin"/>
</dbReference>
<dbReference type="InterPro" id="IPR000429">
    <property type="entry name" value="Prot_inh_hirudin"/>
</dbReference>
<dbReference type="Pfam" id="PF00713">
    <property type="entry name" value="Hirudin"/>
    <property type="match status" value="1"/>
</dbReference>
<dbReference type="PIRSF" id="PIRSF001640">
    <property type="entry name" value="Hirudin"/>
    <property type="match status" value="1"/>
</dbReference>
<dbReference type="PRINTS" id="PR00777">
    <property type="entry name" value="HIRUDIN"/>
</dbReference>
<dbReference type="SUPFAM" id="SSF57262">
    <property type="entry name" value="Leech antihemostatic proteins"/>
    <property type="match status" value="1"/>
</dbReference>
<feature type="chain" id="PRO_0000195644" description="Hirudin-2">
    <location>
        <begin position="1"/>
        <end position="65"/>
    </location>
</feature>
<feature type="region of interest" description="Interaction with thrombin active site" evidence="1">
    <location>
        <begin position="1"/>
        <end position="3"/>
    </location>
</feature>
<feature type="region of interest" description="Disordered" evidence="2">
    <location>
        <begin position="39"/>
        <end position="65"/>
    </location>
</feature>
<feature type="region of interest" description="Interaction with fibrinogen-binding exosite of thrombin" evidence="1">
    <location>
        <begin position="55"/>
        <end position="65"/>
    </location>
</feature>
<feature type="compositionally biased region" description="Acidic residues" evidence="2">
    <location>
        <begin position="55"/>
        <end position="65"/>
    </location>
</feature>
<feature type="modified residue" description="Sulfotyrosine" evidence="1">
    <location>
        <position position="63"/>
    </location>
</feature>
<feature type="glycosylation site" description="O-linked (GalNAc...) threonine" evidence="1">
    <location>
        <position position="45"/>
    </location>
</feature>
<feature type="disulfide bond" evidence="1">
    <location>
        <begin position="6"/>
        <end position="14"/>
    </location>
</feature>
<feature type="disulfide bond" evidence="1">
    <location>
        <begin position="16"/>
        <end position="28"/>
    </location>
</feature>
<feature type="disulfide bond" evidence="1">
    <location>
        <begin position="22"/>
        <end position="39"/>
    </location>
</feature>
<feature type="helix" evidence="4">
    <location>
        <begin position="61"/>
        <end position="63"/>
    </location>
</feature>
<proteinExistence type="evidence at protein level"/>
<reference key="1">
    <citation type="journal article" date="1989" name="FEBS Lett.">
        <title>Primary structures of new 'iso-hirudins'.</title>
        <authorList>
            <person name="Scharf M."/>
            <person name="Engels J."/>
            <person name="Tripier D."/>
        </authorList>
    </citation>
    <scope>PROTEIN SEQUENCE</scope>
</reference>